<feature type="chain" id="PRO_0000245695" description="NAD(P)H-quinone oxidoreductase subunit I">
    <location>
        <begin position="1"/>
        <end position="215"/>
    </location>
</feature>
<feature type="domain" description="4Fe-4S ferredoxin-type 1" evidence="1">
    <location>
        <begin position="55"/>
        <end position="84"/>
    </location>
</feature>
<feature type="domain" description="4Fe-4S ferredoxin-type 2" evidence="1">
    <location>
        <begin position="95"/>
        <end position="124"/>
    </location>
</feature>
<feature type="region of interest" description="Disordered" evidence="2">
    <location>
        <begin position="169"/>
        <end position="215"/>
    </location>
</feature>
<feature type="compositionally biased region" description="Basic and acidic residues" evidence="2">
    <location>
        <begin position="169"/>
        <end position="180"/>
    </location>
</feature>
<feature type="binding site" evidence="1">
    <location>
        <position position="64"/>
    </location>
    <ligand>
        <name>[4Fe-4S] cluster</name>
        <dbReference type="ChEBI" id="CHEBI:49883"/>
        <label>1</label>
    </ligand>
</feature>
<feature type="binding site" evidence="1">
    <location>
        <position position="67"/>
    </location>
    <ligand>
        <name>[4Fe-4S] cluster</name>
        <dbReference type="ChEBI" id="CHEBI:49883"/>
        <label>1</label>
    </ligand>
</feature>
<feature type="binding site" evidence="1">
    <location>
        <position position="70"/>
    </location>
    <ligand>
        <name>[4Fe-4S] cluster</name>
        <dbReference type="ChEBI" id="CHEBI:49883"/>
        <label>1</label>
    </ligand>
</feature>
<feature type="binding site" evidence="1">
    <location>
        <position position="74"/>
    </location>
    <ligand>
        <name>[4Fe-4S] cluster</name>
        <dbReference type="ChEBI" id="CHEBI:49883"/>
        <label>2</label>
    </ligand>
</feature>
<feature type="binding site" evidence="1">
    <location>
        <position position="104"/>
    </location>
    <ligand>
        <name>[4Fe-4S] cluster</name>
        <dbReference type="ChEBI" id="CHEBI:49883"/>
        <label>2</label>
    </ligand>
</feature>
<feature type="binding site" evidence="1">
    <location>
        <position position="107"/>
    </location>
    <ligand>
        <name>[4Fe-4S] cluster</name>
        <dbReference type="ChEBI" id="CHEBI:49883"/>
        <label>2</label>
    </ligand>
</feature>
<feature type="binding site" evidence="1">
    <location>
        <position position="110"/>
    </location>
    <ligand>
        <name>[4Fe-4S] cluster</name>
        <dbReference type="ChEBI" id="CHEBI:49883"/>
        <label>2</label>
    </ligand>
</feature>
<feature type="binding site" evidence="1">
    <location>
        <position position="114"/>
    </location>
    <ligand>
        <name>[4Fe-4S] cluster</name>
        <dbReference type="ChEBI" id="CHEBI:49883"/>
        <label>1</label>
    </ligand>
</feature>
<gene>
    <name evidence="1" type="primary">ndhI</name>
    <name type="ordered locus">Syncc9605_2411</name>
</gene>
<keyword id="KW-0004">4Fe-4S</keyword>
<keyword id="KW-0408">Iron</keyword>
<keyword id="KW-0411">Iron-sulfur</keyword>
<keyword id="KW-0472">Membrane</keyword>
<keyword id="KW-0479">Metal-binding</keyword>
<keyword id="KW-0520">NAD</keyword>
<keyword id="KW-0521">NADP</keyword>
<keyword id="KW-0618">Plastoquinone</keyword>
<keyword id="KW-0874">Quinone</keyword>
<keyword id="KW-0677">Repeat</keyword>
<keyword id="KW-0793">Thylakoid</keyword>
<keyword id="KW-1278">Translocase</keyword>
<accession>Q3AGY9</accession>
<proteinExistence type="inferred from homology"/>
<dbReference type="EC" id="7.1.1.-" evidence="1"/>
<dbReference type="EMBL" id="CP000110">
    <property type="protein sequence ID" value="ABB36143.1"/>
    <property type="molecule type" value="Genomic_DNA"/>
</dbReference>
<dbReference type="RefSeq" id="WP_011365339.1">
    <property type="nucleotide sequence ID" value="NC_007516.1"/>
</dbReference>
<dbReference type="SMR" id="Q3AGY9"/>
<dbReference type="STRING" id="110662.Syncc9605_2411"/>
<dbReference type="KEGG" id="syd:Syncc9605_2411"/>
<dbReference type="eggNOG" id="COG1143">
    <property type="taxonomic scope" value="Bacteria"/>
</dbReference>
<dbReference type="HOGENOM" id="CLU_122804_0_0_3"/>
<dbReference type="OrthoDB" id="9798098at2"/>
<dbReference type="GO" id="GO:0031676">
    <property type="term" value="C:plasma membrane-derived thylakoid membrane"/>
    <property type="evidence" value="ECO:0007669"/>
    <property type="project" value="UniProtKB-SubCell"/>
</dbReference>
<dbReference type="GO" id="GO:0051539">
    <property type="term" value="F:4 iron, 4 sulfur cluster binding"/>
    <property type="evidence" value="ECO:0007669"/>
    <property type="project" value="UniProtKB-KW"/>
</dbReference>
<dbReference type="GO" id="GO:0005506">
    <property type="term" value="F:iron ion binding"/>
    <property type="evidence" value="ECO:0007669"/>
    <property type="project" value="UniProtKB-UniRule"/>
</dbReference>
<dbReference type="GO" id="GO:0008137">
    <property type="term" value="F:NADH dehydrogenase (ubiquinone) activity"/>
    <property type="evidence" value="ECO:0007669"/>
    <property type="project" value="InterPro"/>
</dbReference>
<dbReference type="GO" id="GO:0048038">
    <property type="term" value="F:quinone binding"/>
    <property type="evidence" value="ECO:0007669"/>
    <property type="project" value="UniProtKB-KW"/>
</dbReference>
<dbReference type="GO" id="GO:0019684">
    <property type="term" value="P:photosynthesis, light reaction"/>
    <property type="evidence" value="ECO:0007669"/>
    <property type="project" value="UniProtKB-UniRule"/>
</dbReference>
<dbReference type="Gene3D" id="3.30.70.3270">
    <property type="match status" value="1"/>
</dbReference>
<dbReference type="HAMAP" id="MF_01351">
    <property type="entry name" value="NDH1_NuoI"/>
    <property type="match status" value="1"/>
</dbReference>
<dbReference type="InterPro" id="IPR017896">
    <property type="entry name" value="4Fe4S_Fe-S-bd"/>
</dbReference>
<dbReference type="InterPro" id="IPR017900">
    <property type="entry name" value="4Fe4S_Fe_S_CS"/>
</dbReference>
<dbReference type="InterPro" id="IPR010226">
    <property type="entry name" value="NADH_quinone_OxRdtase_chainI"/>
</dbReference>
<dbReference type="InterPro" id="IPR004497">
    <property type="entry name" value="NDHI"/>
</dbReference>
<dbReference type="NCBIfam" id="TIGR00403">
    <property type="entry name" value="ndhI"/>
    <property type="match status" value="1"/>
</dbReference>
<dbReference type="NCBIfam" id="TIGR01971">
    <property type="entry name" value="NuoI"/>
    <property type="match status" value="1"/>
</dbReference>
<dbReference type="NCBIfam" id="NF004537">
    <property type="entry name" value="PRK05888.1-3"/>
    <property type="match status" value="1"/>
</dbReference>
<dbReference type="PANTHER" id="PTHR47275">
    <property type="entry name" value="NAD(P)H-QUINONE OXIDOREDUCTASE SUBUNIT I, CHLOROPLASTIC"/>
    <property type="match status" value="1"/>
</dbReference>
<dbReference type="PANTHER" id="PTHR47275:SF1">
    <property type="entry name" value="NAD(P)H-QUINONE OXIDOREDUCTASE SUBUNIT I, CHLOROPLASTIC"/>
    <property type="match status" value="1"/>
</dbReference>
<dbReference type="Pfam" id="PF12838">
    <property type="entry name" value="Fer4_7"/>
    <property type="match status" value="1"/>
</dbReference>
<dbReference type="SUPFAM" id="SSF54862">
    <property type="entry name" value="4Fe-4S ferredoxins"/>
    <property type="match status" value="1"/>
</dbReference>
<dbReference type="PROSITE" id="PS00198">
    <property type="entry name" value="4FE4S_FER_1"/>
    <property type="match status" value="2"/>
</dbReference>
<dbReference type="PROSITE" id="PS51379">
    <property type="entry name" value="4FE4S_FER_2"/>
    <property type="match status" value="2"/>
</dbReference>
<protein>
    <recommendedName>
        <fullName evidence="1">NAD(P)H-quinone oxidoreductase subunit I</fullName>
        <ecNumber evidence="1">7.1.1.-</ecNumber>
    </recommendedName>
    <alternativeName>
        <fullName evidence="1">NAD(P)H dehydrogenase I subunit I</fullName>
    </alternativeName>
    <alternativeName>
        <fullName evidence="1">NDH-1 subunit I</fullName>
        <shortName evidence="1">NDH-I</shortName>
    </alternativeName>
</protein>
<sequence>MFGFLKQVGDYTRDAVDAARNLAQGFSVTFDHMQRRPVTVQYPYEKLIPSERYRGRIHYEFDKCIACEVCVRVCPINLPVVDWVMNKATKKKELRNYSIDFGVCIFCGNCVEYCPTNCLSMTEEYELAAFDRHSLNYDNVALGRLPTSVTTDPSVVPLRELAYLPAGEMDPHGVASDRPRAGQLPAQVLETLTPPAKPTAKNDGQSSSEAKEGDA</sequence>
<reference key="1">
    <citation type="submission" date="2005-07" db="EMBL/GenBank/DDBJ databases">
        <title>Complete sequence of Synechococcus sp. CC9605.</title>
        <authorList>
            <consortium name="US DOE Joint Genome Institute"/>
            <person name="Copeland A."/>
            <person name="Lucas S."/>
            <person name="Lapidus A."/>
            <person name="Barry K."/>
            <person name="Detter J.C."/>
            <person name="Glavina T."/>
            <person name="Hammon N."/>
            <person name="Israni S."/>
            <person name="Pitluck S."/>
            <person name="Schmutz J."/>
            <person name="Martinez M."/>
            <person name="Larimer F."/>
            <person name="Land M."/>
            <person name="Kyrpides N."/>
            <person name="Ivanova N."/>
            <person name="Richardson P."/>
        </authorList>
    </citation>
    <scope>NUCLEOTIDE SEQUENCE [LARGE SCALE GENOMIC DNA]</scope>
    <source>
        <strain>CC9605</strain>
    </source>
</reference>
<comment type="function">
    <text evidence="1">NDH-1 shuttles electrons from an unknown electron donor, via FMN and iron-sulfur (Fe-S) centers, to quinones in the respiratory and/or the photosynthetic chain. The immediate electron acceptor for the enzyme in this species is believed to be plastoquinone. Couples the redox reaction to proton translocation, and thus conserves the redox energy in a proton gradient.</text>
</comment>
<comment type="catalytic activity">
    <reaction evidence="1">
        <text>a plastoquinone + NADH + (n+1) H(+)(in) = a plastoquinol + NAD(+) + n H(+)(out)</text>
        <dbReference type="Rhea" id="RHEA:42608"/>
        <dbReference type="Rhea" id="RHEA-COMP:9561"/>
        <dbReference type="Rhea" id="RHEA-COMP:9562"/>
        <dbReference type="ChEBI" id="CHEBI:15378"/>
        <dbReference type="ChEBI" id="CHEBI:17757"/>
        <dbReference type="ChEBI" id="CHEBI:57540"/>
        <dbReference type="ChEBI" id="CHEBI:57945"/>
        <dbReference type="ChEBI" id="CHEBI:62192"/>
    </reaction>
</comment>
<comment type="catalytic activity">
    <reaction evidence="1">
        <text>a plastoquinone + NADPH + (n+1) H(+)(in) = a plastoquinol + NADP(+) + n H(+)(out)</text>
        <dbReference type="Rhea" id="RHEA:42612"/>
        <dbReference type="Rhea" id="RHEA-COMP:9561"/>
        <dbReference type="Rhea" id="RHEA-COMP:9562"/>
        <dbReference type="ChEBI" id="CHEBI:15378"/>
        <dbReference type="ChEBI" id="CHEBI:17757"/>
        <dbReference type="ChEBI" id="CHEBI:57783"/>
        <dbReference type="ChEBI" id="CHEBI:58349"/>
        <dbReference type="ChEBI" id="CHEBI:62192"/>
    </reaction>
</comment>
<comment type="cofactor">
    <cofactor evidence="1">
        <name>[4Fe-4S] cluster</name>
        <dbReference type="ChEBI" id="CHEBI:49883"/>
    </cofactor>
    <text evidence="1">Binds 2 [4Fe-4S] clusters per subunit.</text>
</comment>
<comment type="subunit">
    <text evidence="1">NDH-1 is composed of at least 11 different subunits.</text>
</comment>
<comment type="subcellular location">
    <subcellularLocation>
        <location evidence="1">Cellular thylakoid membrane</location>
        <topology evidence="1">Peripheral membrane protein</topology>
    </subcellularLocation>
</comment>
<comment type="similarity">
    <text evidence="1">Belongs to the complex I 23 kDa subunit family.</text>
</comment>
<evidence type="ECO:0000255" key="1">
    <source>
        <dbReference type="HAMAP-Rule" id="MF_01351"/>
    </source>
</evidence>
<evidence type="ECO:0000256" key="2">
    <source>
        <dbReference type="SAM" id="MobiDB-lite"/>
    </source>
</evidence>
<organism>
    <name type="scientific">Synechococcus sp. (strain CC9605)</name>
    <dbReference type="NCBI Taxonomy" id="110662"/>
    <lineage>
        <taxon>Bacteria</taxon>
        <taxon>Bacillati</taxon>
        <taxon>Cyanobacteriota</taxon>
        <taxon>Cyanophyceae</taxon>
        <taxon>Synechococcales</taxon>
        <taxon>Synechococcaceae</taxon>
        <taxon>Synechococcus</taxon>
    </lineage>
</organism>
<name>NDHI_SYNSC</name>